<proteinExistence type="inferred from homology"/>
<comment type="function">
    <text evidence="1">Required for the formation of a threonylcarbamoyl group on adenosine at position 37 (t(6)A37) in tRNAs that read codons beginning with adenine. Is involved in the transfer of the threonylcarbamoyl moiety of threonylcarbamoyl-AMP (TC-AMP) to the N6 group of A37, together with TsaE and TsaB. TsaD likely plays a direct catalytic role in this reaction.</text>
</comment>
<comment type="catalytic activity">
    <reaction evidence="1">
        <text>L-threonylcarbamoyladenylate + adenosine(37) in tRNA = N(6)-L-threonylcarbamoyladenosine(37) in tRNA + AMP + H(+)</text>
        <dbReference type="Rhea" id="RHEA:37059"/>
        <dbReference type="Rhea" id="RHEA-COMP:10162"/>
        <dbReference type="Rhea" id="RHEA-COMP:10163"/>
        <dbReference type="ChEBI" id="CHEBI:15378"/>
        <dbReference type="ChEBI" id="CHEBI:73682"/>
        <dbReference type="ChEBI" id="CHEBI:74411"/>
        <dbReference type="ChEBI" id="CHEBI:74418"/>
        <dbReference type="ChEBI" id="CHEBI:456215"/>
        <dbReference type="EC" id="2.3.1.234"/>
    </reaction>
</comment>
<comment type="cofactor">
    <cofactor evidence="1">
        <name>Fe(2+)</name>
        <dbReference type="ChEBI" id="CHEBI:29033"/>
    </cofactor>
    <text evidence="1">Binds 1 Fe(2+) ion per subunit.</text>
</comment>
<comment type="subcellular location">
    <subcellularLocation>
        <location evidence="1">Cytoplasm</location>
    </subcellularLocation>
</comment>
<comment type="similarity">
    <text evidence="1">Belongs to the KAE1 / TsaD family.</text>
</comment>
<accession>A9L5I3</accession>
<organism>
    <name type="scientific">Shewanella baltica (strain OS195)</name>
    <dbReference type="NCBI Taxonomy" id="399599"/>
    <lineage>
        <taxon>Bacteria</taxon>
        <taxon>Pseudomonadati</taxon>
        <taxon>Pseudomonadota</taxon>
        <taxon>Gammaproteobacteria</taxon>
        <taxon>Alteromonadales</taxon>
        <taxon>Shewanellaceae</taxon>
        <taxon>Shewanella</taxon>
    </lineage>
</organism>
<evidence type="ECO:0000255" key="1">
    <source>
        <dbReference type="HAMAP-Rule" id="MF_01445"/>
    </source>
</evidence>
<sequence length="338" mass="36246">MRVLGIETSCDETGIAVYDDELGLLSHTLYSQVKLHADYGGVVPELASRDHVRKIVPLIRQALKDANTEMADLDGIAYTKGPGLIGALLVGACVGRSLAFAWDKPAIGVHHMEGHLLAPMLEDDAPEFPFVALLVSGGHSMLVKVDGIGRYEVLGESVDDAAGEAFDKTAKLMGLDYPGGPRLAKLAAKGLPAGYKFPRPMTDRPGLDFSFSGLKTFTANTIAAEPDDEQTRANIARAFEEAVVDTLAIKCRRALKQTGYNRLVIAGGVSANTRLRETLAEMMNSLGGQVFYPRGEFCTDNGAMIAFAGLQRLKAGQHEDLAVKGQPRWPLDTLPPVA</sequence>
<protein>
    <recommendedName>
        <fullName evidence="1">tRNA N6-adenosine threonylcarbamoyltransferase</fullName>
        <ecNumber evidence="1">2.3.1.234</ecNumber>
    </recommendedName>
    <alternativeName>
        <fullName evidence="1">N6-L-threonylcarbamoyladenine synthase</fullName>
        <shortName evidence="1">t(6)A synthase</shortName>
    </alternativeName>
    <alternativeName>
        <fullName evidence="1">t(6)A37 threonylcarbamoyladenosine biosynthesis protein TsaD</fullName>
    </alternativeName>
    <alternativeName>
        <fullName evidence="1">tRNA threonylcarbamoyladenosine biosynthesis protein TsaD</fullName>
    </alternativeName>
</protein>
<gene>
    <name evidence="1" type="primary">tsaD</name>
    <name type="synonym">gcp</name>
    <name type="ordered locus">Sbal195_1225</name>
</gene>
<feature type="chain" id="PRO_1000087488" description="tRNA N6-adenosine threonylcarbamoyltransferase">
    <location>
        <begin position="1"/>
        <end position="338"/>
    </location>
</feature>
<feature type="binding site" evidence="1">
    <location>
        <position position="111"/>
    </location>
    <ligand>
        <name>Fe cation</name>
        <dbReference type="ChEBI" id="CHEBI:24875"/>
    </ligand>
</feature>
<feature type="binding site" evidence="1">
    <location>
        <position position="115"/>
    </location>
    <ligand>
        <name>Fe cation</name>
        <dbReference type="ChEBI" id="CHEBI:24875"/>
    </ligand>
</feature>
<feature type="binding site" evidence="1">
    <location>
        <begin position="134"/>
        <end position="138"/>
    </location>
    <ligand>
        <name>substrate</name>
    </ligand>
</feature>
<feature type="binding site" evidence="1">
    <location>
        <position position="167"/>
    </location>
    <ligand>
        <name>substrate</name>
    </ligand>
</feature>
<feature type="binding site" evidence="1">
    <location>
        <position position="180"/>
    </location>
    <ligand>
        <name>substrate</name>
    </ligand>
</feature>
<feature type="binding site" evidence="1">
    <location>
        <position position="272"/>
    </location>
    <ligand>
        <name>substrate</name>
    </ligand>
</feature>
<feature type="binding site" evidence="1">
    <location>
        <position position="300"/>
    </location>
    <ligand>
        <name>Fe cation</name>
        <dbReference type="ChEBI" id="CHEBI:24875"/>
    </ligand>
</feature>
<reference key="1">
    <citation type="submission" date="2007-11" db="EMBL/GenBank/DDBJ databases">
        <title>Complete sequence of chromosome of Shewanella baltica OS195.</title>
        <authorList>
            <consortium name="US DOE Joint Genome Institute"/>
            <person name="Copeland A."/>
            <person name="Lucas S."/>
            <person name="Lapidus A."/>
            <person name="Barry K."/>
            <person name="Glavina del Rio T."/>
            <person name="Dalin E."/>
            <person name="Tice H."/>
            <person name="Pitluck S."/>
            <person name="Chain P."/>
            <person name="Malfatti S."/>
            <person name="Shin M."/>
            <person name="Vergez L."/>
            <person name="Schmutz J."/>
            <person name="Larimer F."/>
            <person name="Land M."/>
            <person name="Hauser L."/>
            <person name="Kyrpides N."/>
            <person name="Kim E."/>
            <person name="Brettar I."/>
            <person name="Rodrigues J."/>
            <person name="Konstantinidis K."/>
            <person name="Klappenbach J."/>
            <person name="Hofle M."/>
            <person name="Tiedje J."/>
            <person name="Richardson P."/>
        </authorList>
    </citation>
    <scope>NUCLEOTIDE SEQUENCE [LARGE SCALE GENOMIC DNA]</scope>
    <source>
        <strain>OS195</strain>
    </source>
</reference>
<dbReference type="EC" id="2.3.1.234" evidence="1"/>
<dbReference type="EMBL" id="CP000891">
    <property type="protein sequence ID" value="ABX48400.1"/>
    <property type="molecule type" value="Genomic_DNA"/>
</dbReference>
<dbReference type="RefSeq" id="WP_006085036.1">
    <property type="nucleotide sequence ID" value="NC_009997.1"/>
</dbReference>
<dbReference type="SMR" id="A9L5I3"/>
<dbReference type="GeneID" id="11771501"/>
<dbReference type="KEGG" id="sbn:Sbal195_1225"/>
<dbReference type="HOGENOM" id="CLU_023208_0_2_6"/>
<dbReference type="Proteomes" id="UP000000770">
    <property type="component" value="Chromosome"/>
</dbReference>
<dbReference type="GO" id="GO:0005737">
    <property type="term" value="C:cytoplasm"/>
    <property type="evidence" value="ECO:0007669"/>
    <property type="project" value="UniProtKB-SubCell"/>
</dbReference>
<dbReference type="GO" id="GO:0005506">
    <property type="term" value="F:iron ion binding"/>
    <property type="evidence" value="ECO:0007669"/>
    <property type="project" value="UniProtKB-UniRule"/>
</dbReference>
<dbReference type="GO" id="GO:0061711">
    <property type="term" value="F:N(6)-L-threonylcarbamoyladenine synthase activity"/>
    <property type="evidence" value="ECO:0007669"/>
    <property type="project" value="UniProtKB-EC"/>
</dbReference>
<dbReference type="GO" id="GO:0002949">
    <property type="term" value="P:tRNA threonylcarbamoyladenosine modification"/>
    <property type="evidence" value="ECO:0007669"/>
    <property type="project" value="UniProtKB-UniRule"/>
</dbReference>
<dbReference type="CDD" id="cd24133">
    <property type="entry name" value="ASKHA_NBD_TsaD_bac"/>
    <property type="match status" value="1"/>
</dbReference>
<dbReference type="FunFam" id="3.30.420.40:FF:000031">
    <property type="entry name" value="tRNA N6-adenosine threonylcarbamoyltransferase"/>
    <property type="match status" value="1"/>
</dbReference>
<dbReference type="Gene3D" id="3.30.420.40">
    <property type="match status" value="2"/>
</dbReference>
<dbReference type="HAMAP" id="MF_01445">
    <property type="entry name" value="TsaD"/>
    <property type="match status" value="1"/>
</dbReference>
<dbReference type="InterPro" id="IPR043129">
    <property type="entry name" value="ATPase_NBD"/>
</dbReference>
<dbReference type="InterPro" id="IPR000905">
    <property type="entry name" value="Gcp-like_dom"/>
</dbReference>
<dbReference type="InterPro" id="IPR017861">
    <property type="entry name" value="KAE1/TsaD"/>
</dbReference>
<dbReference type="InterPro" id="IPR017860">
    <property type="entry name" value="Peptidase_M22_CS"/>
</dbReference>
<dbReference type="InterPro" id="IPR022450">
    <property type="entry name" value="TsaD"/>
</dbReference>
<dbReference type="NCBIfam" id="TIGR00329">
    <property type="entry name" value="gcp_kae1"/>
    <property type="match status" value="1"/>
</dbReference>
<dbReference type="NCBIfam" id="TIGR03723">
    <property type="entry name" value="T6A_TsaD_YgjD"/>
    <property type="match status" value="1"/>
</dbReference>
<dbReference type="PANTHER" id="PTHR11735">
    <property type="entry name" value="TRNA N6-ADENOSINE THREONYLCARBAMOYLTRANSFERASE"/>
    <property type="match status" value="1"/>
</dbReference>
<dbReference type="PANTHER" id="PTHR11735:SF6">
    <property type="entry name" value="TRNA N6-ADENOSINE THREONYLCARBAMOYLTRANSFERASE, MITOCHONDRIAL"/>
    <property type="match status" value="1"/>
</dbReference>
<dbReference type="Pfam" id="PF00814">
    <property type="entry name" value="TsaD"/>
    <property type="match status" value="1"/>
</dbReference>
<dbReference type="PRINTS" id="PR00789">
    <property type="entry name" value="OSIALOPTASE"/>
</dbReference>
<dbReference type="SUPFAM" id="SSF53067">
    <property type="entry name" value="Actin-like ATPase domain"/>
    <property type="match status" value="2"/>
</dbReference>
<dbReference type="PROSITE" id="PS01016">
    <property type="entry name" value="GLYCOPROTEASE"/>
    <property type="match status" value="1"/>
</dbReference>
<name>TSAD_SHEB9</name>
<keyword id="KW-0012">Acyltransferase</keyword>
<keyword id="KW-0963">Cytoplasm</keyword>
<keyword id="KW-0408">Iron</keyword>
<keyword id="KW-0479">Metal-binding</keyword>
<keyword id="KW-0808">Transferase</keyword>
<keyword id="KW-0819">tRNA processing</keyword>